<protein>
    <recommendedName>
        <fullName evidence="1">Glutamate 5-kinase</fullName>
        <ecNumber evidence="1">2.7.2.11</ecNumber>
    </recommendedName>
    <alternativeName>
        <fullName evidence="1">Gamma-glutamyl kinase</fullName>
        <shortName evidence="1">GK</shortName>
    </alternativeName>
</protein>
<proteinExistence type="inferred from homology"/>
<sequence>MTMAMQPQTLVIKIGTSSLARPETGQLALSTIAALVETVCKLIGQGHRVVLVSSGAIGVGCSRLGLTERPKKMALKQAIAAVGQGRLMRTYDDLFSSLRQPIAQILLTRRELIERTAYVNAYNTFQALFELGVIAIVNENDTVAIDELKFGDNDTLSALVASLVEADWLFLLTDVDRLYSSDPRLDPDAYPIPLVKAAELAQLQVRTDSTGSAWGTGGMATKITAARIATGSGVRTVITHGQKPEQILAILQGANLGTQFEAQPRSDNARKRWIAYGLVPTGKIFIDAGAVQALKARGKSLLAIGVVALEGEFSATDAVIICDPQGQELGRGLVNYNCNELEKIKGLHSEAIAAVLGYVGPDTVIHRDNLVLQEN</sequence>
<comment type="function">
    <text evidence="1">Catalyzes the transfer of a phosphate group to glutamate to form L-glutamate 5-phosphate.</text>
</comment>
<comment type="catalytic activity">
    <reaction evidence="1">
        <text>L-glutamate + ATP = L-glutamyl 5-phosphate + ADP</text>
        <dbReference type="Rhea" id="RHEA:14877"/>
        <dbReference type="ChEBI" id="CHEBI:29985"/>
        <dbReference type="ChEBI" id="CHEBI:30616"/>
        <dbReference type="ChEBI" id="CHEBI:58274"/>
        <dbReference type="ChEBI" id="CHEBI:456216"/>
        <dbReference type="EC" id="2.7.2.11"/>
    </reaction>
</comment>
<comment type="pathway">
    <text evidence="1">Amino-acid biosynthesis; L-proline biosynthesis; L-glutamate 5-semialdehyde from L-glutamate: step 1/2.</text>
</comment>
<comment type="subcellular location">
    <subcellularLocation>
        <location evidence="1">Cytoplasm</location>
    </subcellularLocation>
</comment>
<comment type="similarity">
    <text evidence="1">Belongs to the glutamate 5-kinase family.</text>
</comment>
<name>PROB_SYNY3</name>
<organism>
    <name type="scientific">Synechocystis sp. (strain ATCC 27184 / PCC 6803 / Kazusa)</name>
    <dbReference type="NCBI Taxonomy" id="1111708"/>
    <lineage>
        <taxon>Bacteria</taxon>
        <taxon>Bacillati</taxon>
        <taxon>Cyanobacteriota</taxon>
        <taxon>Cyanophyceae</taxon>
        <taxon>Synechococcales</taxon>
        <taxon>Merismopediaceae</taxon>
        <taxon>Synechocystis</taxon>
    </lineage>
</organism>
<reference key="1">
    <citation type="journal article" date="1996" name="DNA Res.">
        <title>Sequence analysis of the genome of the unicellular cyanobacterium Synechocystis sp. strain PCC6803. II. Sequence determination of the entire genome and assignment of potential protein-coding regions.</title>
        <authorList>
            <person name="Kaneko T."/>
            <person name="Sato S."/>
            <person name="Kotani H."/>
            <person name="Tanaka A."/>
            <person name="Asamizu E."/>
            <person name="Nakamura Y."/>
            <person name="Miyajima N."/>
            <person name="Hirosawa M."/>
            <person name="Sugiura M."/>
            <person name="Sasamoto S."/>
            <person name="Kimura T."/>
            <person name="Hosouchi T."/>
            <person name="Matsuno A."/>
            <person name="Muraki A."/>
            <person name="Nakazaki N."/>
            <person name="Naruo K."/>
            <person name="Okumura S."/>
            <person name="Shimpo S."/>
            <person name="Takeuchi C."/>
            <person name="Wada T."/>
            <person name="Watanabe A."/>
            <person name="Yamada M."/>
            <person name="Yasuda M."/>
            <person name="Tabata S."/>
        </authorList>
    </citation>
    <scope>NUCLEOTIDE SEQUENCE [LARGE SCALE GENOMIC DNA]</scope>
    <source>
        <strain>ATCC 27184 / PCC 6803 / Kazusa</strain>
    </source>
</reference>
<gene>
    <name evidence="1" type="primary">proB</name>
    <name type="ordered locus">slr2035</name>
</gene>
<dbReference type="EC" id="2.7.2.11" evidence="1"/>
<dbReference type="EMBL" id="BA000022">
    <property type="protein sequence ID" value="BAA17096.1"/>
    <property type="molecule type" value="Genomic_DNA"/>
</dbReference>
<dbReference type="PIR" id="S75182">
    <property type="entry name" value="S75182"/>
</dbReference>
<dbReference type="SMR" id="P73071"/>
<dbReference type="FunCoup" id="P73071">
    <property type="interactions" value="338"/>
</dbReference>
<dbReference type="STRING" id="1148.gene:10497957"/>
<dbReference type="PaxDb" id="1148-1652172"/>
<dbReference type="EnsemblBacteria" id="BAA17096">
    <property type="protein sequence ID" value="BAA17096"/>
    <property type="gene ID" value="BAA17096"/>
</dbReference>
<dbReference type="KEGG" id="syn:slr2035"/>
<dbReference type="eggNOG" id="COG0263">
    <property type="taxonomic scope" value="Bacteria"/>
</dbReference>
<dbReference type="InParanoid" id="P73071"/>
<dbReference type="PhylomeDB" id="P73071"/>
<dbReference type="UniPathway" id="UPA00098">
    <property type="reaction ID" value="UER00359"/>
</dbReference>
<dbReference type="Proteomes" id="UP000001425">
    <property type="component" value="Chromosome"/>
</dbReference>
<dbReference type="GO" id="GO:0005829">
    <property type="term" value="C:cytosol"/>
    <property type="evidence" value="ECO:0000318"/>
    <property type="project" value="GO_Central"/>
</dbReference>
<dbReference type="GO" id="GO:0005524">
    <property type="term" value="F:ATP binding"/>
    <property type="evidence" value="ECO:0007669"/>
    <property type="project" value="UniProtKB-KW"/>
</dbReference>
<dbReference type="GO" id="GO:0004349">
    <property type="term" value="F:glutamate 5-kinase activity"/>
    <property type="evidence" value="ECO:0000318"/>
    <property type="project" value="GO_Central"/>
</dbReference>
<dbReference type="GO" id="GO:0003723">
    <property type="term" value="F:RNA binding"/>
    <property type="evidence" value="ECO:0007669"/>
    <property type="project" value="InterPro"/>
</dbReference>
<dbReference type="GO" id="GO:0055129">
    <property type="term" value="P:L-proline biosynthetic process"/>
    <property type="evidence" value="ECO:0007669"/>
    <property type="project" value="UniProtKB-UniRule"/>
</dbReference>
<dbReference type="GO" id="GO:0006561">
    <property type="term" value="P:proline biosynthetic process"/>
    <property type="evidence" value="ECO:0000318"/>
    <property type="project" value="GO_Central"/>
</dbReference>
<dbReference type="CDD" id="cd04242">
    <property type="entry name" value="AAK_G5K_ProB"/>
    <property type="match status" value="1"/>
</dbReference>
<dbReference type="CDD" id="cd21157">
    <property type="entry name" value="PUA_G5K"/>
    <property type="match status" value="1"/>
</dbReference>
<dbReference type="FunFam" id="2.30.130.10:FF:000022">
    <property type="entry name" value="Glutamate 5-kinase"/>
    <property type="match status" value="1"/>
</dbReference>
<dbReference type="FunFam" id="3.40.1160.10:FF:000050">
    <property type="entry name" value="Glutamate 5-kinase"/>
    <property type="match status" value="1"/>
</dbReference>
<dbReference type="FunFam" id="3.40.1160.10:FF:000041">
    <property type="entry name" value="Glutamate 5-kinase, putative"/>
    <property type="match status" value="1"/>
</dbReference>
<dbReference type="Gene3D" id="3.40.1160.10">
    <property type="entry name" value="Acetylglutamate kinase-like"/>
    <property type="match status" value="2"/>
</dbReference>
<dbReference type="Gene3D" id="2.30.130.10">
    <property type="entry name" value="PUA domain"/>
    <property type="match status" value="1"/>
</dbReference>
<dbReference type="HAMAP" id="MF_00456">
    <property type="entry name" value="ProB"/>
    <property type="match status" value="1"/>
</dbReference>
<dbReference type="InterPro" id="IPR036393">
    <property type="entry name" value="AceGlu_kinase-like_sf"/>
</dbReference>
<dbReference type="InterPro" id="IPR001048">
    <property type="entry name" value="Asp/Glu/Uridylate_kinase"/>
</dbReference>
<dbReference type="InterPro" id="IPR041739">
    <property type="entry name" value="G5K_ProB"/>
</dbReference>
<dbReference type="InterPro" id="IPR001057">
    <property type="entry name" value="Glu/AcGlu_kinase"/>
</dbReference>
<dbReference type="InterPro" id="IPR011529">
    <property type="entry name" value="Glu_5kinase"/>
</dbReference>
<dbReference type="InterPro" id="IPR005715">
    <property type="entry name" value="Glu_5kinase/COase_Synthase"/>
</dbReference>
<dbReference type="InterPro" id="IPR019797">
    <property type="entry name" value="Glutamate_5-kinase_CS"/>
</dbReference>
<dbReference type="InterPro" id="IPR002478">
    <property type="entry name" value="PUA"/>
</dbReference>
<dbReference type="InterPro" id="IPR015947">
    <property type="entry name" value="PUA-like_sf"/>
</dbReference>
<dbReference type="InterPro" id="IPR036974">
    <property type="entry name" value="PUA_sf"/>
</dbReference>
<dbReference type="NCBIfam" id="TIGR01027">
    <property type="entry name" value="proB"/>
    <property type="match status" value="1"/>
</dbReference>
<dbReference type="PANTHER" id="PTHR43654">
    <property type="entry name" value="GLUTAMATE 5-KINASE"/>
    <property type="match status" value="1"/>
</dbReference>
<dbReference type="PANTHER" id="PTHR43654:SF3">
    <property type="entry name" value="GLUTAMATE 5-KINASE"/>
    <property type="match status" value="1"/>
</dbReference>
<dbReference type="Pfam" id="PF00696">
    <property type="entry name" value="AA_kinase"/>
    <property type="match status" value="1"/>
</dbReference>
<dbReference type="Pfam" id="PF01472">
    <property type="entry name" value="PUA"/>
    <property type="match status" value="1"/>
</dbReference>
<dbReference type="PIRSF" id="PIRSF000729">
    <property type="entry name" value="GK"/>
    <property type="match status" value="1"/>
</dbReference>
<dbReference type="PRINTS" id="PR00474">
    <property type="entry name" value="GLU5KINASE"/>
</dbReference>
<dbReference type="SMART" id="SM00359">
    <property type="entry name" value="PUA"/>
    <property type="match status" value="1"/>
</dbReference>
<dbReference type="SUPFAM" id="SSF53633">
    <property type="entry name" value="Carbamate kinase-like"/>
    <property type="match status" value="1"/>
</dbReference>
<dbReference type="SUPFAM" id="SSF88697">
    <property type="entry name" value="PUA domain-like"/>
    <property type="match status" value="1"/>
</dbReference>
<dbReference type="PROSITE" id="PS00902">
    <property type="entry name" value="GLUTAMATE_5_KINASE"/>
    <property type="match status" value="1"/>
</dbReference>
<dbReference type="PROSITE" id="PS50890">
    <property type="entry name" value="PUA"/>
    <property type="match status" value="1"/>
</dbReference>
<evidence type="ECO:0000255" key="1">
    <source>
        <dbReference type="HAMAP-Rule" id="MF_00456"/>
    </source>
</evidence>
<keyword id="KW-0028">Amino-acid biosynthesis</keyword>
<keyword id="KW-0067">ATP-binding</keyword>
<keyword id="KW-0963">Cytoplasm</keyword>
<keyword id="KW-0418">Kinase</keyword>
<keyword id="KW-0547">Nucleotide-binding</keyword>
<keyword id="KW-0641">Proline biosynthesis</keyword>
<keyword id="KW-1185">Reference proteome</keyword>
<keyword id="KW-0808">Transferase</keyword>
<feature type="chain" id="PRO_0000109745" description="Glutamate 5-kinase">
    <location>
        <begin position="1"/>
        <end position="375"/>
    </location>
</feature>
<feature type="domain" description="PUA" evidence="1">
    <location>
        <begin position="281"/>
        <end position="359"/>
    </location>
</feature>
<feature type="binding site" evidence="1">
    <location>
        <position position="13"/>
    </location>
    <ligand>
        <name>ATP</name>
        <dbReference type="ChEBI" id="CHEBI:30616"/>
    </ligand>
</feature>
<feature type="binding site" evidence="1">
    <location>
        <position position="54"/>
    </location>
    <ligand>
        <name>substrate</name>
    </ligand>
</feature>
<feature type="binding site" evidence="1">
    <location>
        <position position="141"/>
    </location>
    <ligand>
        <name>substrate</name>
    </ligand>
</feature>
<feature type="binding site" evidence="1">
    <location>
        <position position="153"/>
    </location>
    <ligand>
        <name>substrate</name>
    </ligand>
</feature>
<feature type="binding site" evidence="1">
    <location>
        <begin position="173"/>
        <end position="174"/>
    </location>
    <ligand>
        <name>ATP</name>
        <dbReference type="ChEBI" id="CHEBI:30616"/>
    </ligand>
</feature>
<feature type="binding site" evidence="1">
    <location>
        <begin position="216"/>
        <end position="222"/>
    </location>
    <ligand>
        <name>ATP</name>
        <dbReference type="ChEBI" id="CHEBI:30616"/>
    </ligand>
</feature>
<accession>P73071</accession>